<dbReference type="EC" id="4.2.1.20" evidence="1"/>
<dbReference type="EMBL" id="CU928158">
    <property type="protein sequence ID" value="CAQ89211.1"/>
    <property type="molecule type" value="Genomic_DNA"/>
</dbReference>
<dbReference type="RefSeq" id="WP_000209509.1">
    <property type="nucleotide sequence ID" value="NC_011740.1"/>
</dbReference>
<dbReference type="SMR" id="B7LS19"/>
<dbReference type="GeneID" id="75057267"/>
<dbReference type="KEGG" id="efe:EFER_1695"/>
<dbReference type="HOGENOM" id="CLU_016734_3_1_6"/>
<dbReference type="OrthoDB" id="9766131at2"/>
<dbReference type="UniPathway" id="UPA00035">
    <property type="reaction ID" value="UER00044"/>
</dbReference>
<dbReference type="Proteomes" id="UP000000745">
    <property type="component" value="Chromosome"/>
</dbReference>
<dbReference type="GO" id="GO:0005737">
    <property type="term" value="C:cytoplasm"/>
    <property type="evidence" value="ECO:0007669"/>
    <property type="project" value="TreeGrafter"/>
</dbReference>
<dbReference type="GO" id="GO:0004834">
    <property type="term" value="F:tryptophan synthase activity"/>
    <property type="evidence" value="ECO:0007669"/>
    <property type="project" value="UniProtKB-UniRule"/>
</dbReference>
<dbReference type="CDD" id="cd06446">
    <property type="entry name" value="Trp-synth_B"/>
    <property type="match status" value="1"/>
</dbReference>
<dbReference type="FunFam" id="3.40.50.1100:FF:000001">
    <property type="entry name" value="Tryptophan synthase beta chain"/>
    <property type="match status" value="1"/>
</dbReference>
<dbReference type="FunFam" id="3.40.50.1100:FF:000004">
    <property type="entry name" value="Tryptophan synthase beta chain"/>
    <property type="match status" value="1"/>
</dbReference>
<dbReference type="Gene3D" id="3.40.50.1100">
    <property type="match status" value="2"/>
</dbReference>
<dbReference type="HAMAP" id="MF_00133">
    <property type="entry name" value="Trp_synth_beta"/>
    <property type="match status" value="1"/>
</dbReference>
<dbReference type="InterPro" id="IPR006653">
    <property type="entry name" value="Trp_synth_b_CS"/>
</dbReference>
<dbReference type="InterPro" id="IPR006654">
    <property type="entry name" value="Trp_synth_beta"/>
</dbReference>
<dbReference type="InterPro" id="IPR023026">
    <property type="entry name" value="Trp_synth_beta/beta-like"/>
</dbReference>
<dbReference type="InterPro" id="IPR001926">
    <property type="entry name" value="TrpB-like_PALP"/>
</dbReference>
<dbReference type="InterPro" id="IPR036052">
    <property type="entry name" value="TrpB-like_PALP_sf"/>
</dbReference>
<dbReference type="NCBIfam" id="TIGR00263">
    <property type="entry name" value="trpB"/>
    <property type="match status" value="1"/>
</dbReference>
<dbReference type="PANTHER" id="PTHR48077:SF3">
    <property type="entry name" value="TRYPTOPHAN SYNTHASE"/>
    <property type="match status" value="1"/>
</dbReference>
<dbReference type="PANTHER" id="PTHR48077">
    <property type="entry name" value="TRYPTOPHAN SYNTHASE-RELATED"/>
    <property type="match status" value="1"/>
</dbReference>
<dbReference type="Pfam" id="PF00291">
    <property type="entry name" value="PALP"/>
    <property type="match status" value="1"/>
</dbReference>
<dbReference type="PIRSF" id="PIRSF001413">
    <property type="entry name" value="Trp_syn_beta"/>
    <property type="match status" value="1"/>
</dbReference>
<dbReference type="SUPFAM" id="SSF53686">
    <property type="entry name" value="Tryptophan synthase beta subunit-like PLP-dependent enzymes"/>
    <property type="match status" value="1"/>
</dbReference>
<dbReference type="PROSITE" id="PS00168">
    <property type="entry name" value="TRP_SYNTHASE_BETA"/>
    <property type="match status" value="1"/>
</dbReference>
<keyword id="KW-0028">Amino-acid biosynthesis</keyword>
<keyword id="KW-0057">Aromatic amino acid biosynthesis</keyword>
<keyword id="KW-0456">Lyase</keyword>
<keyword id="KW-0663">Pyridoxal phosphate</keyword>
<keyword id="KW-0822">Tryptophan biosynthesis</keyword>
<protein>
    <recommendedName>
        <fullName evidence="1">Tryptophan synthase beta chain</fullName>
        <ecNumber evidence="1">4.2.1.20</ecNumber>
    </recommendedName>
</protein>
<accession>B7LS19</accession>
<feature type="chain" id="PRO_1000117759" description="Tryptophan synthase beta chain">
    <location>
        <begin position="1"/>
        <end position="397"/>
    </location>
</feature>
<feature type="modified residue" description="N6-(pyridoxal phosphate)lysine" evidence="1">
    <location>
        <position position="87"/>
    </location>
</feature>
<evidence type="ECO:0000255" key="1">
    <source>
        <dbReference type="HAMAP-Rule" id="MF_00133"/>
    </source>
</evidence>
<reference key="1">
    <citation type="journal article" date="2009" name="PLoS Genet.">
        <title>Organised genome dynamics in the Escherichia coli species results in highly diverse adaptive paths.</title>
        <authorList>
            <person name="Touchon M."/>
            <person name="Hoede C."/>
            <person name="Tenaillon O."/>
            <person name="Barbe V."/>
            <person name="Baeriswyl S."/>
            <person name="Bidet P."/>
            <person name="Bingen E."/>
            <person name="Bonacorsi S."/>
            <person name="Bouchier C."/>
            <person name="Bouvet O."/>
            <person name="Calteau A."/>
            <person name="Chiapello H."/>
            <person name="Clermont O."/>
            <person name="Cruveiller S."/>
            <person name="Danchin A."/>
            <person name="Diard M."/>
            <person name="Dossat C."/>
            <person name="Karoui M.E."/>
            <person name="Frapy E."/>
            <person name="Garry L."/>
            <person name="Ghigo J.M."/>
            <person name="Gilles A.M."/>
            <person name="Johnson J."/>
            <person name="Le Bouguenec C."/>
            <person name="Lescat M."/>
            <person name="Mangenot S."/>
            <person name="Martinez-Jehanne V."/>
            <person name="Matic I."/>
            <person name="Nassif X."/>
            <person name="Oztas S."/>
            <person name="Petit M.A."/>
            <person name="Pichon C."/>
            <person name="Rouy Z."/>
            <person name="Ruf C.S."/>
            <person name="Schneider D."/>
            <person name="Tourret J."/>
            <person name="Vacherie B."/>
            <person name="Vallenet D."/>
            <person name="Medigue C."/>
            <person name="Rocha E.P.C."/>
            <person name="Denamur E."/>
        </authorList>
    </citation>
    <scope>NUCLEOTIDE SEQUENCE [LARGE SCALE GENOMIC DNA]</scope>
    <source>
        <strain>ATCC 35469 / DSM 13698 / BCRC 15582 / CCUG 18766 / IAM 14443 / JCM 21226 / LMG 7866 / NBRC 102419 / NCTC 12128 / CDC 0568-73</strain>
    </source>
</reference>
<sequence>MTTLLNPYFGEFGGMYVPQILMPALRQLEEAFVSAQKDPEFQAQFNDLLKNYAGRPTALTKCQNITAGTNTTLYLKREDLLHGGAHKTNQVLGQALLAKRMGKTEIIAETGAGQHGVASALASALLGLKCRIYMGAKDVERQSPNVFRMRLMGAEVIPVHSGSATLKDACNEALRDWSGSYETAHYMLGTAAGPHPYPTIVREFQRMIGEETKAQILEREGRLPDAVIACVGGGSNAIGMFADFINETDVGLIGVEPGGHGIETGEHGAPLKHGRVGIYFGMKAPMMQTEDGQIEESYSISAGLDFPSVGPQHAYLNSIGRADYVSITDDEALEAFKTLCLHEGIIPALESSHALAHALKMMRENPEKEQLLVVNLSGRGDKDIFTVHDILKARGEI</sequence>
<organism>
    <name type="scientific">Escherichia fergusonii (strain ATCC 35469 / DSM 13698 / CCUG 18766 / IAM 14443 / JCM 21226 / LMG 7866 / NBRC 102419 / NCTC 12128 / CDC 0568-73)</name>
    <dbReference type="NCBI Taxonomy" id="585054"/>
    <lineage>
        <taxon>Bacteria</taxon>
        <taxon>Pseudomonadati</taxon>
        <taxon>Pseudomonadota</taxon>
        <taxon>Gammaproteobacteria</taxon>
        <taxon>Enterobacterales</taxon>
        <taxon>Enterobacteriaceae</taxon>
        <taxon>Escherichia</taxon>
    </lineage>
</organism>
<comment type="function">
    <text evidence="1">The beta subunit is responsible for the synthesis of L-tryptophan from indole and L-serine.</text>
</comment>
<comment type="catalytic activity">
    <reaction evidence="1">
        <text>(1S,2R)-1-C-(indol-3-yl)glycerol 3-phosphate + L-serine = D-glyceraldehyde 3-phosphate + L-tryptophan + H2O</text>
        <dbReference type="Rhea" id="RHEA:10532"/>
        <dbReference type="ChEBI" id="CHEBI:15377"/>
        <dbReference type="ChEBI" id="CHEBI:33384"/>
        <dbReference type="ChEBI" id="CHEBI:57912"/>
        <dbReference type="ChEBI" id="CHEBI:58866"/>
        <dbReference type="ChEBI" id="CHEBI:59776"/>
        <dbReference type="EC" id="4.2.1.20"/>
    </reaction>
</comment>
<comment type="cofactor">
    <cofactor evidence="1">
        <name>pyridoxal 5'-phosphate</name>
        <dbReference type="ChEBI" id="CHEBI:597326"/>
    </cofactor>
</comment>
<comment type="pathway">
    <text evidence="1">Amino-acid biosynthesis; L-tryptophan biosynthesis; L-tryptophan from chorismate: step 5/5.</text>
</comment>
<comment type="subunit">
    <text evidence="1">Tetramer of two alpha and two beta chains.</text>
</comment>
<comment type="similarity">
    <text evidence="1">Belongs to the TrpB family.</text>
</comment>
<name>TRPB_ESCF3</name>
<gene>
    <name evidence="1" type="primary">trpB</name>
    <name type="ordered locus">EFER_1695</name>
</gene>
<proteinExistence type="inferred from homology"/>